<gene>
    <name type="primary">DPB4</name>
    <name type="ordered locus">DEHA2G08756g</name>
</gene>
<proteinExistence type="inferred from homology"/>
<name>DPB4_DEBHA</name>
<protein>
    <recommendedName>
        <fullName>DNA polymerase epsilon subunit D</fullName>
    </recommendedName>
    <alternativeName>
        <fullName>DNA polymerase II subunit D</fullName>
    </alternativeName>
</protein>
<organism>
    <name type="scientific">Debaryomyces hansenii (strain ATCC 36239 / CBS 767 / BCRC 21394 / JCM 1990 / NBRC 0083 / IGC 2968)</name>
    <name type="common">Yeast</name>
    <name type="synonym">Torulaspora hansenii</name>
    <dbReference type="NCBI Taxonomy" id="284592"/>
    <lineage>
        <taxon>Eukaryota</taxon>
        <taxon>Fungi</taxon>
        <taxon>Dikarya</taxon>
        <taxon>Ascomycota</taxon>
        <taxon>Saccharomycotina</taxon>
        <taxon>Pichiomycetes</taxon>
        <taxon>Debaryomycetaceae</taxon>
        <taxon>Debaryomyces</taxon>
    </lineage>
</organism>
<accession>Q6BIP4</accession>
<evidence type="ECO:0000250" key="1"/>
<evidence type="ECO:0000250" key="2">
    <source>
        <dbReference type="UniProtKB" id="Q04603"/>
    </source>
</evidence>
<evidence type="ECO:0000256" key="3">
    <source>
        <dbReference type="SAM" id="MobiDB-lite"/>
    </source>
</evidence>
<keyword id="KW-0235">DNA replication</keyword>
<keyword id="KW-0539">Nucleus</keyword>
<keyword id="KW-1185">Reference proteome</keyword>
<sequence length="247" mass="27698">MPPKGWRKNTEGQYPQPNKDQDLVSIDEILFPRATVQKLAKNIMNASSDEGASNMILAKDSMIALQRSSTVFVSHLMFQARQISKDEGRKTINAQDILSALEKAEFSGFIPEVKQKLSVFESNIALRKKHKADKKVPKPEGVDASPSSKRLKDNDEQIIQRDNSADMEDDPEAEADEDITEELANDEDTNNKESKEEEEADEELDDEKDGEEVEENPIALLSREEDELRGEEAADEDEGQNSSDDDS</sequence>
<feature type="chain" id="PRO_0000191750" description="DNA polymerase epsilon subunit D">
    <location>
        <begin position="1"/>
        <end position="247"/>
    </location>
</feature>
<feature type="region of interest" description="Disordered" evidence="3">
    <location>
        <begin position="128"/>
        <end position="247"/>
    </location>
</feature>
<feature type="compositionally biased region" description="Basic and acidic residues" evidence="3">
    <location>
        <begin position="150"/>
        <end position="159"/>
    </location>
</feature>
<feature type="compositionally biased region" description="Acidic residues" evidence="3">
    <location>
        <begin position="165"/>
        <end position="188"/>
    </location>
</feature>
<feature type="compositionally biased region" description="Acidic residues" evidence="3">
    <location>
        <begin position="196"/>
        <end position="215"/>
    </location>
</feature>
<feature type="compositionally biased region" description="Acidic residues" evidence="3">
    <location>
        <begin position="224"/>
        <end position="247"/>
    </location>
</feature>
<dbReference type="EMBL" id="CR382139">
    <property type="protein sequence ID" value="CAG90392.2"/>
    <property type="molecule type" value="Genomic_DNA"/>
</dbReference>
<dbReference type="RefSeq" id="XP_461927.2">
    <property type="nucleotide sequence ID" value="XM_461927.1"/>
</dbReference>
<dbReference type="SMR" id="Q6BIP4"/>
<dbReference type="FunCoup" id="Q6BIP4">
    <property type="interactions" value="233"/>
</dbReference>
<dbReference type="STRING" id="284592.Q6BIP4"/>
<dbReference type="GeneID" id="2904813"/>
<dbReference type="KEGG" id="dha:DEHA2G08756g"/>
<dbReference type="VEuPathDB" id="FungiDB:DEHA2G08756g"/>
<dbReference type="eggNOG" id="KOG0870">
    <property type="taxonomic scope" value="Eukaryota"/>
</dbReference>
<dbReference type="HOGENOM" id="CLU_087036_0_0_1"/>
<dbReference type="InParanoid" id="Q6BIP4"/>
<dbReference type="OMA" id="NTYRRKV"/>
<dbReference type="OrthoDB" id="1707486at2759"/>
<dbReference type="Proteomes" id="UP000000599">
    <property type="component" value="Chromosome G"/>
</dbReference>
<dbReference type="GO" id="GO:0008623">
    <property type="term" value="C:CHRAC"/>
    <property type="evidence" value="ECO:0007669"/>
    <property type="project" value="TreeGrafter"/>
</dbReference>
<dbReference type="GO" id="GO:0008622">
    <property type="term" value="C:epsilon DNA polymerase complex"/>
    <property type="evidence" value="ECO:0007669"/>
    <property type="project" value="TreeGrafter"/>
</dbReference>
<dbReference type="GO" id="GO:0031490">
    <property type="term" value="F:chromatin DNA binding"/>
    <property type="evidence" value="ECO:0007669"/>
    <property type="project" value="TreeGrafter"/>
</dbReference>
<dbReference type="GO" id="GO:0046982">
    <property type="term" value="F:protein heterodimerization activity"/>
    <property type="evidence" value="ECO:0007669"/>
    <property type="project" value="InterPro"/>
</dbReference>
<dbReference type="GO" id="GO:0006974">
    <property type="term" value="P:DNA damage response"/>
    <property type="evidence" value="ECO:0007669"/>
    <property type="project" value="TreeGrafter"/>
</dbReference>
<dbReference type="GO" id="GO:0031507">
    <property type="term" value="P:heterochromatin formation"/>
    <property type="evidence" value="ECO:0007669"/>
    <property type="project" value="TreeGrafter"/>
</dbReference>
<dbReference type="GO" id="GO:0006272">
    <property type="term" value="P:leading strand elongation"/>
    <property type="evidence" value="ECO:0007669"/>
    <property type="project" value="TreeGrafter"/>
</dbReference>
<dbReference type="CDD" id="cd22928">
    <property type="entry name" value="HFD_POLE3_DPB4"/>
    <property type="match status" value="1"/>
</dbReference>
<dbReference type="Gene3D" id="1.10.20.10">
    <property type="entry name" value="Histone, subunit A"/>
    <property type="match status" value="1"/>
</dbReference>
<dbReference type="InterPro" id="IPR051377">
    <property type="entry name" value="DNA_Pol-Epsilon_Subunit"/>
</dbReference>
<dbReference type="InterPro" id="IPR009072">
    <property type="entry name" value="Histone-fold"/>
</dbReference>
<dbReference type="InterPro" id="IPR007125">
    <property type="entry name" value="Histone_H2A/H2B/H3"/>
</dbReference>
<dbReference type="PANTHER" id="PTHR46172">
    <property type="entry name" value="DNA POLYMERASE EPSILON SUBUNIT 3"/>
    <property type="match status" value="1"/>
</dbReference>
<dbReference type="PANTHER" id="PTHR46172:SF1">
    <property type="entry name" value="DNA POLYMERASE EPSILON SUBUNIT 3"/>
    <property type="match status" value="1"/>
</dbReference>
<dbReference type="Pfam" id="PF00125">
    <property type="entry name" value="Histone"/>
    <property type="match status" value="1"/>
</dbReference>
<dbReference type="SUPFAM" id="SSF47113">
    <property type="entry name" value="Histone-fold"/>
    <property type="match status" value="1"/>
</dbReference>
<comment type="function">
    <text evidence="2">As accessory component of the DNA polymerase epsilon (DNA polymerase II) participates in chromosomal DNA replication.</text>
</comment>
<comment type="subunit">
    <text evidence="1">Heterotetramer. Consists of four subunits: POL2, DPB2, DPB3 and DPB4 (By similarity).</text>
</comment>
<comment type="subcellular location">
    <subcellularLocation>
        <location evidence="1">Nucleus</location>
    </subcellularLocation>
</comment>
<comment type="miscellaneous">
    <text>In eukaryotes there are five DNA polymerases: alpha, beta, gamma, delta, and epsilon which are responsible for different reactions of DNA synthesis.</text>
</comment>
<reference key="1">
    <citation type="journal article" date="2004" name="Nature">
        <title>Genome evolution in yeasts.</title>
        <authorList>
            <person name="Dujon B."/>
            <person name="Sherman D."/>
            <person name="Fischer G."/>
            <person name="Durrens P."/>
            <person name="Casaregola S."/>
            <person name="Lafontaine I."/>
            <person name="de Montigny J."/>
            <person name="Marck C."/>
            <person name="Neuveglise C."/>
            <person name="Talla E."/>
            <person name="Goffard N."/>
            <person name="Frangeul L."/>
            <person name="Aigle M."/>
            <person name="Anthouard V."/>
            <person name="Babour A."/>
            <person name="Barbe V."/>
            <person name="Barnay S."/>
            <person name="Blanchin S."/>
            <person name="Beckerich J.-M."/>
            <person name="Beyne E."/>
            <person name="Bleykasten C."/>
            <person name="Boisrame A."/>
            <person name="Boyer J."/>
            <person name="Cattolico L."/>
            <person name="Confanioleri F."/>
            <person name="de Daruvar A."/>
            <person name="Despons L."/>
            <person name="Fabre E."/>
            <person name="Fairhead C."/>
            <person name="Ferry-Dumazet H."/>
            <person name="Groppi A."/>
            <person name="Hantraye F."/>
            <person name="Hennequin C."/>
            <person name="Jauniaux N."/>
            <person name="Joyet P."/>
            <person name="Kachouri R."/>
            <person name="Kerrest A."/>
            <person name="Koszul R."/>
            <person name="Lemaire M."/>
            <person name="Lesur I."/>
            <person name="Ma L."/>
            <person name="Muller H."/>
            <person name="Nicaud J.-M."/>
            <person name="Nikolski M."/>
            <person name="Oztas S."/>
            <person name="Ozier-Kalogeropoulos O."/>
            <person name="Pellenz S."/>
            <person name="Potier S."/>
            <person name="Richard G.-F."/>
            <person name="Straub M.-L."/>
            <person name="Suleau A."/>
            <person name="Swennen D."/>
            <person name="Tekaia F."/>
            <person name="Wesolowski-Louvel M."/>
            <person name="Westhof E."/>
            <person name="Wirth B."/>
            <person name="Zeniou-Meyer M."/>
            <person name="Zivanovic Y."/>
            <person name="Bolotin-Fukuhara M."/>
            <person name="Thierry A."/>
            <person name="Bouchier C."/>
            <person name="Caudron B."/>
            <person name="Scarpelli C."/>
            <person name="Gaillardin C."/>
            <person name="Weissenbach J."/>
            <person name="Wincker P."/>
            <person name="Souciet J.-L."/>
        </authorList>
    </citation>
    <scope>NUCLEOTIDE SEQUENCE [LARGE SCALE GENOMIC DNA]</scope>
    <source>
        <strain>ATCC 36239 / CBS 767 / BCRC 21394 / JCM 1990 / NBRC 0083 / IGC 2968</strain>
    </source>
</reference>